<gene>
    <name evidence="1" type="primary">vpr</name>
</gene>
<comment type="function">
    <text evidence="1">During virus replication, may deplete host UNG protein, and incude G2-M cell cycle arrest. Acts by targeting specific host proteins for degradation by the 26S proteasome, through association with the cellular CUL4A-DDB1 E3 ligase complex by direct interaction with host VPRPB/DCAF-1. Cell cycle arrest reportedly occurs within hours of infection and is not blocked by antiviral agents, suggesting that it is initiated by the VPR carried into the virion. Additionally, VPR induces apoptosis in a cell cycle dependent manner suggesting that these two effects are mechanistically linked. Detected in the serum and cerebrospinal fluid of AIDS patient, VPR may also induce cell death to bystander cells.</text>
</comment>
<comment type="function">
    <text evidence="1">During virus entry, plays a role in the transport of the viral pre-integration (PIC) complex to the host nucleus. This function is crucial for viral infection of non-dividing macrophages. May act directly at the nuclear pore complex, by binding nucleoporins phenylalanine-glycine (FG)-repeat regions.</text>
</comment>
<comment type="subunit">
    <text evidence="1">Homooligomer, may form homodimer. Interacts with p6-gag region of the Pr55 Gag precursor protein through a (Leu-X-X)4 motif near the C-terminus of the P6gag protein. Interacts with host UNG. May interact with host RAD23A/HHR23A. Interacts with host VPRBP/DCAF1, leading to hijack the CUL4A-RBX1-DDB1-DCAF1/VPRBP complex, mediating ubiquitination of host proteins such as TERT and ZGPAT and arrest of the cell cycle in G2 phase.</text>
</comment>
<comment type="subcellular location">
    <subcellularLocation>
        <location evidence="1">Virion</location>
    </subcellularLocation>
    <subcellularLocation>
        <location evidence="1">Host nucleus</location>
    </subcellularLocation>
    <subcellularLocation>
        <location evidence="1">Host extracellular space</location>
    </subcellularLocation>
    <text evidence="1">Incorporation into virion is dependent on p6 GAG sequences. Lacks a canonical nuclear localization signal, thus import into nucleus may function independently of the human importin pathway. Detected in high quantity in the serum and cerebrospinal fluid of AIDS patient.</text>
</comment>
<comment type="PTM">
    <text evidence="1">Phosphorylated on several residues by host. These phosphorylations regulate VPR activity for the nuclear import of the HIV-1 pre-integration complex.</text>
</comment>
<comment type="miscellaneous">
    <text evidence="1">HIV-1 lineages are divided in three main groups, M (for Major), O (for Outlier), and N (for New, or Non-M, Non-O). The vast majority of strains found worldwide belong to the group M. Group O seems to be endemic to and largely confined to Cameroon and neighboring countries in West Central Africa, where these viruses represent a small minority of HIV-1 strains. The group N is represented by a limited number of isolates from Cameroonian persons. The group M is further subdivided in 9 clades or subtypes (A to D, F to H, J and K).</text>
</comment>
<comment type="similarity">
    <text evidence="1">Belongs to the HIV-1 VPR protein family.</text>
</comment>
<feature type="chain" id="PRO_0000085442" description="Protein Vpr">
    <location>
        <begin position="1"/>
        <end position="96"/>
    </location>
</feature>
<feature type="region of interest" description="Homooligomerization" evidence="1">
    <location>
        <begin position="1"/>
        <end position="42"/>
    </location>
</feature>
<feature type="modified residue" description="Phosphoserine; by host" evidence="1">
    <location>
        <position position="79"/>
    </location>
</feature>
<feature type="modified residue" description="Phosphoserine; by host" evidence="1">
    <location>
        <position position="94"/>
    </location>
</feature>
<feature type="modified residue" description="Phosphoserine; by host" evidence="1">
    <location>
        <position position="96"/>
    </location>
</feature>
<organism>
    <name type="scientific">Human immunodeficiency virus type 1 group M subtype D (isolate ELI)</name>
    <name type="common">HIV-1</name>
    <dbReference type="NCBI Taxonomy" id="11689"/>
    <lineage>
        <taxon>Viruses</taxon>
        <taxon>Riboviria</taxon>
        <taxon>Pararnavirae</taxon>
        <taxon>Artverviricota</taxon>
        <taxon>Revtraviricetes</taxon>
        <taxon>Ortervirales</taxon>
        <taxon>Retroviridae</taxon>
        <taxon>Orthoretrovirinae</taxon>
        <taxon>Lentivirus</taxon>
        <taxon>Human immunodeficiency virus type 1</taxon>
    </lineage>
</organism>
<protein>
    <recommendedName>
        <fullName evidence="1">Protein Vpr</fullName>
    </recommendedName>
    <alternativeName>
        <fullName evidence="1">R ORF protein</fullName>
    </alternativeName>
    <alternativeName>
        <fullName evidence="1">Viral protein R</fullName>
    </alternativeName>
</protein>
<organismHost>
    <name type="scientific">Homo sapiens</name>
    <name type="common">Human</name>
    <dbReference type="NCBI Taxonomy" id="9606"/>
</organismHost>
<accession>P05956</accession>
<proteinExistence type="inferred from homology"/>
<evidence type="ECO:0000255" key="1">
    <source>
        <dbReference type="HAMAP-Rule" id="MF_04080"/>
    </source>
</evidence>
<keyword id="KW-0010">Activator</keyword>
<keyword id="KW-0014">AIDS</keyword>
<keyword id="KW-0053">Apoptosis</keyword>
<keyword id="KW-0131">Cell cycle</keyword>
<keyword id="KW-1079">Host G2/M cell cycle arrest by virus</keyword>
<keyword id="KW-1048">Host nucleus</keyword>
<keyword id="KW-0945">Host-virus interaction</keyword>
<keyword id="KW-0407">Ion channel</keyword>
<keyword id="KW-0406">Ion transport</keyword>
<keyword id="KW-1121">Modulation of host cell cycle by virus</keyword>
<keyword id="KW-0597">Phosphoprotein</keyword>
<keyword id="KW-1185">Reference proteome</keyword>
<keyword id="KW-0804">Transcription</keyword>
<keyword id="KW-0805">Transcription regulation</keyword>
<keyword id="KW-0813">Transport</keyword>
<keyword id="KW-1163">Viral penetration into host nucleus</keyword>
<keyword id="KW-0946">Virion</keyword>
<keyword id="KW-1160">Virus entry into host cell</keyword>
<name>VPR_HV1EL</name>
<reference key="1">
    <citation type="journal article" date="1986" name="Cell">
        <title>Genetic variability of the AIDS virus: nucleotide sequence analysis of two isolates from African patients.</title>
        <authorList>
            <person name="Alizon M."/>
            <person name="Wain-Hobson S."/>
            <person name="Montagnier L."/>
            <person name="Sonigo P."/>
        </authorList>
    </citation>
    <scope>NUCLEOTIDE SEQUENCE [GENOMIC DNA]</scope>
</reference>
<dbReference type="EMBL" id="K03454">
    <property type="protein sequence ID" value="AAA44327.1"/>
    <property type="molecule type" value="Genomic_DNA"/>
</dbReference>
<dbReference type="SMR" id="P05956"/>
<dbReference type="Proteomes" id="UP000007693">
    <property type="component" value="Segment"/>
</dbReference>
<dbReference type="GO" id="GO:0043657">
    <property type="term" value="C:host cell"/>
    <property type="evidence" value="ECO:0007669"/>
    <property type="project" value="GOC"/>
</dbReference>
<dbReference type="GO" id="GO:0042025">
    <property type="term" value="C:host cell nucleus"/>
    <property type="evidence" value="ECO:0007669"/>
    <property type="project" value="UniProtKB-SubCell"/>
</dbReference>
<dbReference type="GO" id="GO:0043655">
    <property type="term" value="C:host extracellular space"/>
    <property type="evidence" value="ECO:0007669"/>
    <property type="project" value="UniProtKB-SubCell"/>
</dbReference>
<dbReference type="GO" id="GO:0044423">
    <property type="term" value="C:virion component"/>
    <property type="evidence" value="ECO:0007669"/>
    <property type="project" value="UniProtKB-UniRule"/>
</dbReference>
<dbReference type="GO" id="GO:0006351">
    <property type="term" value="P:DNA-templated transcription"/>
    <property type="evidence" value="ECO:0007669"/>
    <property type="project" value="UniProtKB-UniRule"/>
</dbReference>
<dbReference type="GO" id="GO:0034220">
    <property type="term" value="P:monoatomic ion transmembrane transport"/>
    <property type="evidence" value="ECO:0007669"/>
    <property type="project" value="UniProtKB-KW"/>
</dbReference>
<dbReference type="GO" id="GO:0051260">
    <property type="term" value="P:protein homooligomerization"/>
    <property type="evidence" value="ECO:0007669"/>
    <property type="project" value="UniProtKB-UniRule"/>
</dbReference>
<dbReference type="GO" id="GO:0006355">
    <property type="term" value="P:regulation of DNA-templated transcription"/>
    <property type="evidence" value="ECO:0007669"/>
    <property type="project" value="UniProtKB-UniRule"/>
</dbReference>
<dbReference type="GO" id="GO:0046718">
    <property type="term" value="P:symbiont entry into host cell"/>
    <property type="evidence" value="ECO:0007669"/>
    <property type="project" value="UniProtKB-KW"/>
</dbReference>
<dbReference type="GO" id="GO:0052151">
    <property type="term" value="P:symbiont-mediated activation of host apoptosis"/>
    <property type="evidence" value="ECO:0007669"/>
    <property type="project" value="UniProtKB-UniRule"/>
</dbReference>
<dbReference type="GO" id="GO:0039592">
    <property type="term" value="P:symbiont-mediated arrest of host cell cycle during G2/M transition"/>
    <property type="evidence" value="ECO:0007669"/>
    <property type="project" value="UniProtKB-UniRule"/>
</dbReference>
<dbReference type="GO" id="GO:0075732">
    <property type="term" value="P:viral penetration into host nucleus"/>
    <property type="evidence" value="ECO:0007669"/>
    <property type="project" value="UniProtKB-UniRule"/>
</dbReference>
<dbReference type="FunFam" id="1.20.5.90:FF:000001">
    <property type="entry name" value="Protein Vpr"/>
    <property type="match status" value="1"/>
</dbReference>
<dbReference type="Gene3D" id="6.10.210.10">
    <property type="match status" value="1"/>
</dbReference>
<dbReference type="Gene3D" id="1.20.5.90">
    <property type="entry name" value="VpR/VpX protein, C-terminal domain"/>
    <property type="match status" value="1"/>
</dbReference>
<dbReference type="HAMAP" id="MF_04080">
    <property type="entry name" value="HIV_VPR"/>
    <property type="match status" value="1"/>
</dbReference>
<dbReference type="InterPro" id="IPR000012">
    <property type="entry name" value="RetroV_VpR/X"/>
</dbReference>
<dbReference type="Pfam" id="PF00522">
    <property type="entry name" value="VPR"/>
    <property type="match status" value="1"/>
</dbReference>
<dbReference type="PRINTS" id="PR00444">
    <property type="entry name" value="HIVVPRVPX"/>
</dbReference>
<sequence>MEQAPADQGPQREPYNEWALELLEELKSEAVRHFPRIWLHSLGQHIYETYGDTWVGVEAIIRILQQLLFIHFRIGCQHSRIGIIRQRRARNGSSRS</sequence>